<feature type="chain" id="PRO_0000305948" description="Mediator of RNA polymerase II transcription subunit 21">
    <location>
        <begin position="1"/>
        <end position="144"/>
    </location>
</feature>
<gene>
    <name type="primary">MED21</name>
    <name type="synonym">SURB7</name>
</gene>
<reference key="1">
    <citation type="submission" date="2004-11" db="EMBL/GenBank/DDBJ databases">
        <authorList>
            <consortium name="The German cDNA consortium"/>
        </authorList>
    </citation>
    <scope>NUCLEOTIDE SEQUENCE [LARGE SCALE MRNA]</scope>
</reference>
<sequence>MADRLTQLQDAVNSLADQFCNAIGVLQQCGPPASFSNIQTAINKDQPANSTEEYAQLFAALIARTAKDIDVLIDSLPSEESTAALQAASLYKLEEENHEAATCLEDVVYRGDMLLEKIQSALADIAQSQLKTRSGTHSQSLPDS</sequence>
<organism>
    <name type="scientific">Pongo abelii</name>
    <name type="common">Sumatran orangutan</name>
    <name type="synonym">Pongo pygmaeus abelii</name>
    <dbReference type="NCBI Taxonomy" id="9601"/>
    <lineage>
        <taxon>Eukaryota</taxon>
        <taxon>Metazoa</taxon>
        <taxon>Chordata</taxon>
        <taxon>Craniata</taxon>
        <taxon>Vertebrata</taxon>
        <taxon>Euteleostomi</taxon>
        <taxon>Mammalia</taxon>
        <taxon>Eutheria</taxon>
        <taxon>Euarchontoglires</taxon>
        <taxon>Primates</taxon>
        <taxon>Haplorrhini</taxon>
        <taxon>Catarrhini</taxon>
        <taxon>Hominidae</taxon>
        <taxon>Pongo</taxon>
    </lineage>
</organism>
<comment type="function">
    <text evidence="1">Component of the Mediator complex, a coactivator involved in the regulated transcription of nearly all RNA polymerase II-dependent genes. Mediator functions as a bridge to convey information from gene-specific regulatory proteins to the basal RNA polymerase II transcription machinery. Mediator is recruited to promoters by direct interactions with regulatory proteins and serves as a scaffold for the assembly of a functional preinitiation complex with RNA polymerase II and the general transcription factors (By similarity).</text>
</comment>
<comment type="subunit">
    <text evidence="1">Component of the Mediator complex, which is composed of MED1, MED4, MED6, MED7, MED8, MED9, MED10, MED11, MED12, MED13, MED13L, MED14, MED15, MED16, MED17, MED18, MED19, MED20, MED21, MED22, MED23, MED24, MED25, MED26, MED27, MED29, MED30, MED31, CCNC, CDK8 and CDC2L6/CDK11. The MED12, MED13, CCNC and CDK8 subunits form a distinct module termed the CDK8 module. Mediator containing the CDK8 module is less active than Mediator lacking this module in supporting transcriptional activation. Individual preparations of the Mediator complex lacking one or more distinct subunits have been variously termed ARC, CRSP, DRIP, PC2, SMCC and TRAP. Interacts with PPARG. Interacts with THRA in a ligand-dependent fashion (By similarity).</text>
</comment>
<comment type="subcellular location">
    <subcellularLocation>
        <location evidence="2">Nucleus</location>
    </subcellularLocation>
</comment>
<comment type="similarity">
    <text evidence="2">Belongs to the Mediator complex subunit 21 family.</text>
</comment>
<name>MED21_PONAB</name>
<accession>Q5RE46</accession>
<evidence type="ECO:0000250" key="1"/>
<evidence type="ECO:0000305" key="2"/>
<keyword id="KW-0010">Activator</keyword>
<keyword id="KW-0539">Nucleus</keyword>
<keyword id="KW-1185">Reference proteome</keyword>
<keyword id="KW-0804">Transcription</keyword>
<keyword id="KW-0805">Transcription regulation</keyword>
<dbReference type="EMBL" id="CR857692">
    <property type="protein sequence ID" value="CAH89961.1"/>
    <property type="molecule type" value="mRNA"/>
</dbReference>
<dbReference type="RefSeq" id="NP_001124922.1">
    <property type="nucleotide sequence ID" value="NM_001131450.1"/>
</dbReference>
<dbReference type="SMR" id="Q5RE46"/>
<dbReference type="FunCoup" id="Q5RE46">
    <property type="interactions" value="2180"/>
</dbReference>
<dbReference type="STRING" id="9601.ENSPPYP00000004996"/>
<dbReference type="GeneID" id="100171792"/>
<dbReference type="KEGG" id="pon:100171792"/>
<dbReference type="CTD" id="9412"/>
<dbReference type="eggNOG" id="KOG1510">
    <property type="taxonomic scope" value="Eukaryota"/>
</dbReference>
<dbReference type="InParanoid" id="Q5RE46"/>
<dbReference type="OrthoDB" id="526653at2759"/>
<dbReference type="Proteomes" id="UP000001595">
    <property type="component" value="Unplaced"/>
</dbReference>
<dbReference type="GO" id="GO:0016592">
    <property type="term" value="C:mediator complex"/>
    <property type="evidence" value="ECO:0007669"/>
    <property type="project" value="InterPro"/>
</dbReference>
<dbReference type="GO" id="GO:0003712">
    <property type="term" value="F:transcription coregulator activity"/>
    <property type="evidence" value="ECO:0007669"/>
    <property type="project" value="TreeGrafter"/>
</dbReference>
<dbReference type="GO" id="GO:0006357">
    <property type="term" value="P:regulation of transcription by RNA polymerase II"/>
    <property type="evidence" value="ECO:0007669"/>
    <property type="project" value="TreeGrafter"/>
</dbReference>
<dbReference type="Gene3D" id="6.10.280.10">
    <property type="entry name" value="Mediator complex, subunit Med21"/>
    <property type="match status" value="1"/>
</dbReference>
<dbReference type="InterPro" id="IPR037212">
    <property type="entry name" value="Med7/Med21-like"/>
</dbReference>
<dbReference type="InterPro" id="IPR021384">
    <property type="entry name" value="Mediator_Med21"/>
</dbReference>
<dbReference type="PANTHER" id="PTHR13381:SF0">
    <property type="entry name" value="MEDIATOR OF RNA POLYMERASE II TRANSCRIPTION SUBUNIT 21"/>
    <property type="match status" value="1"/>
</dbReference>
<dbReference type="PANTHER" id="PTHR13381">
    <property type="entry name" value="RNA POLYMERASE II HOLOENZYME COMPONENT SRB7"/>
    <property type="match status" value="1"/>
</dbReference>
<dbReference type="Pfam" id="PF11221">
    <property type="entry name" value="Med21"/>
    <property type="match status" value="1"/>
</dbReference>
<dbReference type="SUPFAM" id="SSF140718">
    <property type="entry name" value="Mediator hinge subcomplex-like"/>
    <property type="match status" value="1"/>
</dbReference>
<protein>
    <recommendedName>
        <fullName>Mediator of RNA polymerase II transcription subunit 21</fullName>
    </recommendedName>
    <alternativeName>
        <fullName>Mediator complex subunit 21</fullName>
    </alternativeName>
    <alternativeName>
        <fullName>RNA polymerase II holoenzyme component SRB7</fullName>
        <shortName>RNAPII complex component SRB7</shortName>
    </alternativeName>
</protein>
<proteinExistence type="evidence at transcript level"/>